<accession>Q8U1U1</accession>
<name>PYRF_PYRFU</name>
<keyword id="KW-0210">Decarboxylase</keyword>
<keyword id="KW-0456">Lyase</keyword>
<keyword id="KW-0665">Pyrimidine biosynthesis</keyword>
<keyword id="KW-1185">Reference proteome</keyword>
<reference key="1">
    <citation type="journal article" date="1999" name="Genetics">
        <title>Divergence of the hyperthermophilic archaea Pyrococcus furiosus and P. horikoshii inferred from complete genomic sequences.</title>
        <authorList>
            <person name="Maeder D.L."/>
            <person name="Weiss R.B."/>
            <person name="Dunn D.M."/>
            <person name="Cherry J.L."/>
            <person name="Gonzalez J.M."/>
            <person name="DiRuggiero J."/>
            <person name="Robb F.T."/>
        </authorList>
    </citation>
    <scope>NUCLEOTIDE SEQUENCE [LARGE SCALE GENOMIC DNA]</scope>
    <source>
        <strain>ATCC 43587 / DSM 3638 / JCM 8422 / Vc1</strain>
    </source>
</reference>
<protein>
    <recommendedName>
        <fullName evidence="1">Orotidine 5'-phosphate decarboxylase</fullName>
        <ecNumber evidence="1">4.1.1.23</ecNumber>
    </recommendedName>
    <alternativeName>
        <fullName evidence="1">OMP decarboxylase</fullName>
        <shortName evidence="1">OMPDCase</shortName>
        <shortName evidence="1">OMPdecase</shortName>
    </alternativeName>
</protein>
<sequence>MIVLALDVYEREKALSIAEDVKDYISMIKVNWPLIIGSGLGVISELKKKTGLPIIADLKLADIPNTNRLIAKKVYDAGADYIILHSFVGRDSVKAVKELGEIIMIVEMSHPGALEFINPLTDKFIDMANEIKPFGVIAPGTRPERIRYIRERLSKDIKVLTPGIGAQGGSPVEALKAGADYIIIGRAIYNAERPREAAKKIFEEVKEWSSR</sequence>
<dbReference type="EC" id="4.1.1.23" evidence="1"/>
<dbReference type="EMBL" id="AE009950">
    <property type="protein sequence ID" value="AAL81238.1"/>
    <property type="molecule type" value="Genomic_DNA"/>
</dbReference>
<dbReference type="RefSeq" id="WP_011012254.1">
    <property type="nucleotide sequence ID" value="NC_003413.1"/>
</dbReference>
<dbReference type="SMR" id="Q8U1U1"/>
<dbReference type="STRING" id="186497.PF1114"/>
<dbReference type="PaxDb" id="186497-PF1114"/>
<dbReference type="GeneID" id="41712923"/>
<dbReference type="KEGG" id="pfu:PF1114"/>
<dbReference type="PATRIC" id="fig|186497.12.peg.1175"/>
<dbReference type="eggNOG" id="arCOG00081">
    <property type="taxonomic scope" value="Archaea"/>
</dbReference>
<dbReference type="HOGENOM" id="CLU_067069_2_0_2"/>
<dbReference type="OrthoDB" id="94124at2157"/>
<dbReference type="PhylomeDB" id="Q8U1U1"/>
<dbReference type="UniPathway" id="UPA00070">
    <property type="reaction ID" value="UER00120"/>
</dbReference>
<dbReference type="Proteomes" id="UP000001013">
    <property type="component" value="Chromosome"/>
</dbReference>
<dbReference type="GO" id="GO:0005829">
    <property type="term" value="C:cytosol"/>
    <property type="evidence" value="ECO:0007669"/>
    <property type="project" value="TreeGrafter"/>
</dbReference>
<dbReference type="GO" id="GO:0004590">
    <property type="term" value="F:orotidine-5'-phosphate decarboxylase activity"/>
    <property type="evidence" value="ECO:0007669"/>
    <property type="project" value="UniProtKB-UniRule"/>
</dbReference>
<dbReference type="GO" id="GO:0006207">
    <property type="term" value="P:'de novo' pyrimidine nucleobase biosynthetic process"/>
    <property type="evidence" value="ECO:0007669"/>
    <property type="project" value="InterPro"/>
</dbReference>
<dbReference type="GO" id="GO:0044205">
    <property type="term" value="P:'de novo' UMP biosynthetic process"/>
    <property type="evidence" value="ECO:0007669"/>
    <property type="project" value="UniProtKB-UniRule"/>
</dbReference>
<dbReference type="CDD" id="cd04725">
    <property type="entry name" value="OMP_decarboxylase_like"/>
    <property type="match status" value="1"/>
</dbReference>
<dbReference type="Gene3D" id="3.20.20.70">
    <property type="entry name" value="Aldolase class I"/>
    <property type="match status" value="1"/>
</dbReference>
<dbReference type="HAMAP" id="MF_01200_A">
    <property type="entry name" value="OMPdecase_type1_A"/>
    <property type="match status" value="1"/>
</dbReference>
<dbReference type="InterPro" id="IPR013785">
    <property type="entry name" value="Aldolase_TIM"/>
</dbReference>
<dbReference type="InterPro" id="IPR014732">
    <property type="entry name" value="OMPdecase"/>
</dbReference>
<dbReference type="InterPro" id="IPR047595">
    <property type="entry name" value="OMPdecase_arc"/>
</dbReference>
<dbReference type="InterPro" id="IPR018089">
    <property type="entry name" value="OMPdecase_AS"/>
</dbReference>
<dbReference type="InterPro" id="IPR001754">
    <property type="entry name" value="OMPdeCOase_dom"/>
</dbReference>
<dbReference type="InterPro" id="IPR011060">
    <property type="entry name" value="RibuloseP-bd_barrel"/>
</dbReference>
<dbReference type="NCBIfam" id="NF010386">
    <property type="entry name" value="PRK13813.1"/>
    <property type="match status" value="1"/>
</dbReference>
<dbReference type="NCBIfam" id="TIGR01740">
    <property type="entry name" value="pyrF"/>
    <property type="match status" value="1"/>
</dbReference>
<dbReference type="PANTHER" id="PTHR32119">
    <property type="entry name" value="OROTIDINE 5'-PHOSPHATE DECARBOXYLASE"/>
    <property type="match status" value="1"/>
</dbReference>
<dbReference type="PANTHER" id="PTHR32119:SF2">
    <property type="entry name" value="OROTIDINE 5'-PHOSPHATE DECARBOXYLASE"/>
    <property type="match status" value="1"/>
</dbReference>
<dbReference type="Pfam" id="PF00215">
    <property type="entry name" value="OMPdecase"/>
    <property type="match status" value="1"/>
</dbReference>
<dbReference type="SMART" id="SM00934">
    <property type="entry name" value="OMPdecase"/>
    <property type="match status" value="1"/>
</dbReference>
<dbReference type="SUPFAM" id="SSF51366">
    <property type="entry name" value="Ribulose-phoshate binding barrel"/>
    <property type="match status" value="1"/>
</dbReference>
<dbReference type="PROSITE" id="PS00156">
    <property type="entry name" value="OMPDECASE"/>
    <property type="match status" value="1"/>
</dbReference>
<proteinExistence type="inferred from homology"/>
<evidence type="ECO:0000255" key="1">
    <source>
        <dbReference type="HAMAP-Rule" id="MF_01200"/>
    </source>
</evidence>
<organism>
    <name type="scientific">Pyrococcus furiosus (strain ATCC 43587 / DSM 3638 / JCM 8422 / Vc1)</name>
    <dbReference type="NCBI Taxonomy" id="186497"/>
    <lineage>
        <taxon>Archaea</taxon>
        <taxon>Methanobacteriati</taxon>
        <taxon>Methanobacteriota</taxon>
        <taxon>Thermococci</taxon>
        <taxon>Thermococcales</taxon>
        <taxon>Thermococcaceae</taxon>
        <taxon>Pyrococcus</taxon>
    </lineage>
</organism>
<feature type="chain" id="PRO_0000134615" description="Orotidine 5'-phosphate decarboxylase">
    <location>
        <begin position="1"/>
        <end position="211"/>
    </location>
</feature>
<feature type="active site" description="Proton donor" evidence="1">
    <location>
        <position position="59"/>
    </location>
</feature>
<feature type="binding site" evidence="1">
    <location>
        <position position="7"/>
    </location>
    <ligand>
        <name>substrate</name>
    </ligand>
</feature>
<feature type="binding site" evidence="1">
    <location>
        <position position="29"/>
    </location>
    <ligand>
        <name>substrate</name>
    </ligand>
</feature>
<feature type="binding site" evidence="1">
    <location>
        <begin position="57"/>
        <end position="66"/>
    </location>
    <ligand>
        <name>substrate</name>
    </ligand>
</feature>
<feature type="binding site" evidence="1">
    <location>
        <position position="109"/>
    </location>
    <ligand>
        <name>substrate</name>
    </ligand>
</feature>
<feature type="binding site" evidence="1">
    <location>
        <begin position="162"/>
        <end position="172"/>
    </location>
    <ligand>
        <name>substrate</name>
    </ligand>
</feature>
<feature type="binding site" evidence="1">
    <location>
        <position position="185"/>
    </location>
    <ligand>
        <name>substrate</name>
    </ligand>
</feature>
<feature type="binding site" evidence="1">
    <location>
        <position position="186"/>
    </location>
    <ligand>
        <name>substrate</name>
    </ligand>
</feature>
<gene>
    <name evidence="1" type="primary">pyrF</name>
    <name type="ordered locus">PF1114</name>
</gene>
<comment type="function">
    <text evidence="1">Catalyzes the decarboxylation of orotidine 5'-monophosphate (OMP) to uridine 5'-monophosphate (UMP).</text>
</comment>
<comment type="catalytic activity">
    <reaction evidence="1">
        <text>orotidine 5'-phosphate + H(+) = UMP + CO2</text>
        <dbReference type="Rhea" id="RHEA:11596"/>
        <dbReference type="ChEBI" id="CHEBI:15378"/>
        <dbReference type="ChEBI" id="CHEBI:16526"/>
        <dbReference type="ChEBI" id="CHEBI:57538"/>
        <dbReference type="ChEBI" id="CHEBI:57865"/>
        <dbReference type="EC" id="4.1.1.23"/>
    </reaction>
</comment>
<comment type="pathway">
    <text evidence="1">Pyrimidine metabolism; UMP biosynthesis via de novo pathway; UMP from orotate: step 2/2.</text>
</comment>
<comment type="subunit">
    <text evidence="1">Homodimer.</text>
</comment>
<comment type="similarity">
    <text evidence="1">Belongs to the OMP decarboxylase family. Type 1 subfamily.</text>
</comment>